<name>LPTR_GEOSE</name>
<keyword id="KW-0046">Antibiotic resistance</keyword>
<keyword id="KW-0428">Leader peptide</keyword>
<keyword id="KW-0614">Plasmid</keyword>
<feature type="peptide" id="PRO_0000044014" description="Tetracycline resistance leader peptide">
    <location>
        <begin position="1"/>
        <end position="20"/>
    </location>
</feature>
<reference key="1">
    <citation type="journal article" date="1985" name="Gene">
        <title>Nucleotide sequence of the tetracycline resistance gene of pTHT15, a thermophilic Bacillus plasmid: comparison with staphylococcal TcR controls.</title>
        <authorList>
            <person name="Hoshino T."/>
            <person name="Ikeda T."/>
            <person name="Tomizuka N."/>
            <person name="Furukawa K."/>
        </authorList>
    </citation>
    <scope>NUCLEOTIDE SEQUENCE [GENOMIC DNA]</scope>
</reference>
<reference key="2">
    <citation type="journal article" date="1986" name="Plasmid">
        <title>The nucleotide sequence of the tetracycline resistance gene of plasmid pNS1981 from Bacillus subtilis differs from pTHT15 from a Thermophilic bacillus by two base pairs.</title>
        <authorList>
            <person name="Makaguchi R."/>
            <person name="Shishido K."/>
            <person name="Hoshino T."/>
            <person name="Furukawa K."/>
        </authorList>
    </citation>
    <scope>NUCLEOTIDE SEQUENCE [GENOMIC DNA]</scope>
</reference>
<geneLocation type="plasmid">
    <name>pTHT15</name>
</geneLocation>
<gene>
    <name type="primary">tetL</name>
</gene>
<accession>P0A3N1</accession>
<accession>P05658</accession>
<protein>
    <recommendedName>
        <fullName>Tetracycline resistance leader peptide</fullName>
    </recommendedName>
</protein>
<organism>
    <name type="scientific">Geobacillus stearothermophilus</name>
    <name type="common">Bacillus stearothermophilus</name>
    <dbReference type="NCBI Taxonomy" id="1422"/>
    <lineage>
        <taxon>Bacteria</taxon>
        <taxon>Bacillati</taxon>
        <taxon>Bacillota</taxon>
        <taxon>Bacilli</taxon>
        <taxon>Bacillales</taxon>
        <taxon>Anoxybacillaceae</taxon>
        <taxon>Geobacillus</taxon>
    </lineage>
</organism>
<proteinExistence type="predicted"/>
<sequence>MKCNECNRVQLKEGSVSLTL</sequence>
<dbReference type="EMBL" id="M11036">
    <property type="protein sequence ID" value="AAA22850.1"/>
    <property type="molecule type" value="Genomic_DNA"/>
</dbReference>
<dbReference type="EMBL" id="D00006">
    <property type="protein sequence ID" value="BAA00004.1"/>
    <property type="molecule type" value="Genomic_DNA"/>
</dbReference>
<dbReference type="GO" id="GO:0046677">
    <property type="term" value="P:response to antibiotic"/>
    <property type="evidence" value="ECO:0007669"/>
    <property type="project" value="UniProtKB-KW"/>
</dbReference>
<dbReference type="InterPro" id="IPR012618">
    <property type="entry name" value="Tet-R_leader_TetL"/>
</dbReference>
<dbReference type="NCBIfam" id="NF033685">
    <property type="entry name" value="Tet_leader_L"/>
    <property type="match status" value="1"/>
</dbReference>
<dbReference type="Pfam" id="PF08050">
    <property type="entry name" value="Tet_res_leader"/>
    <property type="match status" value="1"/>
</dbReference>